<accession>A9A8Y7</accession>
<sequence length="278" mass="31041">MDIKAYFELIRLKNCLTASFGAFIGGLIASYFNISMIDNLILASIVVFLVCGFGNALNDIYDLKIDKINKPKRPIPSKRISLGEARIFSYLLVVMGLIISMFNITCFLMAVLNSIVLQQYASTYKKNKIVGNLIVAYLTGSVFIFGGIAVGNIDVTIMLFLCALFAMWSREIIKDYEDIEGDIKEKVISIPIKCGEKSIYIAAFLLVFAVLLSPLPYLFGFFGIYYLISVIFCDLLFLIGIYNLVMNPSKKEAKKASRNIKIVTNLVLIAFLIGSLFK</sequence>
<organism>
    <name type="scientific">Methanococcus maripaludis (strain C6 / ATCC BAA-1332)</name>
    <dbReference type="NCBI Taxonomy" id="444158"/>
    <lineage>
        <taxon>Archaea</taxon>
        <taxon>Methanobacteriati</taxon>
        <taxon>Methanobacteriota</taxon>
        <taxon>Methanomada group</taxon>
        <taxon>Methanococci</taxon>
        <taxon>Methanococcales</taxon>
        <taxon>Methanococcaceae</taxon>
        <taxon>Methanococcus</taxon>
    </lineage>
</organism>
<protein>
    <recommendedName>
        <fullName evidence="1">Digeranylgeranylglyceryl phosphate synthase</fullName>
        <shortName evidence="1">DGGGP synthase</shortName>
        <shortName evidence="1">DGGGPS</shortName>
        <ecNumber evidence="1">2.5.1.42</ecNumber>
    </recommendedName>
    <alternativeName>
        <fullName evidence="1">(S)-2,3-di-O-geranylgeranylglyceryl phosphate synthase</fullName>
    </alternativeName>
    <alternativeName>
        <fullName evidence="1">Geranylgeranylglycerol-phosphate geranylgeranyltransferase</fullName>
    </alternativeName>
</protein>
<name>DGGGP_METM6</name>
<feature type="chain" id="PRO_0000350704" description="Digeranylgeranylglyceryl phosphate synthase">
    <location>
        <begin position="1"/>
        <end position="278"/>
    </location>
</feature>
<feature type="transmembrane region" description="Helical" evidence="1">
    <location>
        <begin position="12"/>
        <end position="32"/>
    </location>
</feature>
<feature type="transmembrane region" description="Helical" evidence="1">
    <location>
        <begin position="34"/>
        <end position="54"/>
    </location>
</feature>
<feature type="transmembrane region" description="Helical" evidence="1">
    <location>
        <begin position="91"/>
        <end position="111"/>
    </location>
</feature>
<feature type="transmembrane region" description="Helical" evidence="1">
    <location>
        <begin position="142"/>
        <end position="162"/>
    </location>
</feature>
<feature type="transmembrane region" description="Helical" evidence="1">
    <location>
        <begin position="204"/>
        <end position="224"/>
    </location>
</feature>
<feature type="transmembrane region" description="Helical" evidence="1">
    <location>
        <begin position="226"/>
        <end position="246"/>
    </location>
</feature>
<feature type="transmembrane region" description="Helical" evidence="1">
    <location>
        <begin position="257"/>
        <end position="277"/>
    </location>
</feature>
<gene>
    <name type="ordered locus">MmarC6_0995</name>
</gene>
<reference key="1">
    <citation type="submission" date="2007-10" db="EMBL/GenBank/DDBJ databases">
        <title>Complete sequence of Methanococcus maripaludis C6.</title>
        <authorList>
            <consortium name="US DOE Joint Genome Institute"/>
            <person name="Copeland A."/>
            <person name="Lucas S."/>
            <person name="Lapidus A."/>
            <person name="Barry K."/>
            <person name="Glavina del Rio T."/>
            <person name="Dalin E."/>
            <person name="Tice H."/>
            <person name="Pitluck S."/>
            <person name="Clum A."/>
            <person name="Schmutz J."/>
            <person name="Larimer F."/>
            <person name="Land M."/>
            <person name="Hauser L."/>
            <person name="Kyrpides N."/>
            <person name="Mikhailova N."/>
            <person name="Sieprawska-Lupa M."/>
            <person name="Whitman W.B."/>
            <person name="Richardson P."/>
        </authorList>
    </citation>
    <scope>NUCLEOTIDE SEQUENCE [LARGE SCALE GENOMIC DNA]</scope>
    <source>
        <strain>C6 / ATCC BAA-1332</strain>
    </source>
</reference>
<dbReference type="EC" id="2.5.1.42" evidence="1"/>
<dbReference type="EMBL" id="CP000867">
    <property type="protein sequence ID" value="ABX01810.1"/>
    <property type="molecule type" value="Genomic_DNA"/>
</dbReference>
<dbReference type="SMR" id="A9A8Y7"/>
<dbReference type="STRING" id="444158.MmarC6_0995"/>
<dbReference type="KEGG" id="mmx:MmarC6_0995"/>
<dbReference type="eggNOG" id="arCOG00476">
    <property type="taxonomic scope" value="Archaea"/>
</dbReference>
<dbReference type="HOGENOM" id="CLU_073311_1_1_2"/>
<dbReference type="OrthoDB" id="11851at2157"/>
<dbReference type="PhylomeDB" id="A9A8Y7"/>
<dbReference type="UniPathway" id="UPA00940"/>
<dbReference type="GO" id="GO:0005886">
    <property type="term" value="C:plasma membrane"/>
    <property type="evidence" value="ECO:0007669"/>
    <property type="project" value="UniProtKB-SubCell"/>
</dbReference>
<dbReference type="GO" id="GO:0047295">
    <property type="term" value="F:geranylgeranylglycerol-phosphate geranylgeranyltransferase activity"/>
    <property type="evidence" value="ECO:0007669"/>
    <property type="project" value="UniProtKB-UniRule"/>
</dbReference>
<dbReference type="GO" id="GO:0000287">
    <property type="term" value="F:magnesium ion binding"/>
    <property type="evidence" value="ECO:0007669"/>
    <property type="project" value="UniProtKB-UniRule"/>
</dbReference>
<dbReference type="GO" id="GO:0046474">
    <property type="term" value="P:glycerophospholipid biosynthetic process"/>
    <property type="evidence" value="ECO:0007669"/>
    <property type="project" value="UniProtKB-UniRule"/>
</dbReference>
<dbReference type="CDD" id="cd13961">
    <property type="entry name" value="PT_UbiA_DGGGPS"/>
    <property type="match status" value="1"/>
</dbReference>
<dbReference type="Gene3D" id="1.10.357.140">
    <property type="entry name" value="UbiA prenyltransferase"/>
    <property type="match status" value="1"/>
</dbReference>
<dbReference type="Gene3D" id="1.20.120.1780">
    <property type="entry name" value="UbiA prenyltransferase"/>
    <property type="match status" value="1"/>
</dbReference>
<dbReference type="HAMAP" id="MF_01286">
    <property type="entry name" value="DGGGP_synth"/>
    <property type="match status" value="1"/>
</dbReference>
<dbReference type="InterPro" id="IPR023547">
    <property type="entry name" value="DGGGP_synth"/>
</dbReference>
<dbReference type="InterPro" id="IPR050475">
    <property type="entry name" value="Prenyltransferase_related"/>
</dbReference>
<dbReference type="InterPro" id="IPR000537">
    <property type="entry name" value="UbiA_prenyltransferase"/>
</dbReference>
<dbReference type="InterPro" id="IPR044878">
    <property type="entry name" value="UbiA_sf"/>
</dbReference>
<dbReference type="PANTHER" id="PTHR42723">
    <property type="entry name" value="CHLOROPHYLL SYNTHASE"/>
    <property type="match status" value="1"/>
</dbReference>
<dbReference type="PANTHER" id="PTHR42723:SF1">
    <property type="entry name" value="CHLOROPHYLL SYNTHASE, CHLOROPLASTIC"/>
    <property type="match status" value="1"/>
</dbReference>
<dbReference type="Pfam" id="PF01040">
    <property type="entry name" value="UbiA"/>
    <property type="match status" value="1"/>
</dbReference>
<comment type="function">
    <text evidence="1">Prenyltransferase that catalyzes the transfer of the geranylgeranyl moiety of geranylgeranyl diphosphate (GGPP) to the C2 hydroxyl of (S)-3-O-geranylgeranylglyceryl phosphate (GGGP). This reaction is the second ether-bond-formation step in the biosynthesis of archaeal membrane lipids.</text>
</comment>
<comment type="catalytic activity">
    <reaction evidence="1">
        <text>sn-3-O-(geranylgeranyl)glycerol 1-phosphate + (2E,6E,10E)-geranylgeranyl diphosphate = 2,3-bis-O-(geranylgeranyl)-sn-glycerol 1-phosphate + diphosphate</text>
        <dbReference type="Rhea" id="RHEA:18109"/>
        <dbReference type="ChEBI" id="CHEBI:33019"/>
        <dbReference type="ChEBI" id="CHEBI:57677"/>
        <dbReference type="ChEBI" id="CHEBI:58756"/>
        <dbReference type="ChEBI" id="CHEBI:58837"/>
        <dbReference type="EC" id="2.5.1.42"/>
    </reaction>
</comment>
<comment type="cofactor">
    <cofactor evidence="1">
        <name>Mg(2+)</name>
        <dbReference type="ChEBI" id="CHEBI:18420"/>
    </cofactor>
</comment>
<comment type="pathway">
    <text evidence="1">Membrane lipid metabolism; glycerophospholipid metabolism.</text>
</comment>
<comment type="subcellular location">
    <subcellularLocation>
        <location evidence="1">Cell membrane</location>
        <topology evidence="1">Multi-pass membrane protein</topology>
    </subcellularLocation>
</comment>
<comment type="similarity">
    <text evidence="1">Belongs to the UbiA prenyltransferase family. DGGGP synthase subfamily.</text>
</comment>
<keyword id="KW-1003">Cell membrane</keyword>
<keyword id="KW-0444">Lipid biosynthesis</keyword>
<keyword id="KW-0443">Lipid metabolism</keyword>
<keyword id="KW-0460">Magnesium</keyword>
<keyword id="KW-0472">Membrane</keyword>
<keyword id="KW-0594">Phospholipid biosynthesis</keyword>
<keyword id="KW-1208">Phospholipid metabolism</keyword>
<keyword id="KW-0808">Transferase</keyword>
<keyword id="KW-0812">Transmembrane</keyword>
<keyword id="KW-1133">Transmembrane helix</keyword>
<proteinExistence type="inferred from homology"/>
<evidence type="ECO:0000255" key="1">
    <source>
        <dbReference type="HAMAP-Rule" id="MF_01286"/>
    </source>
</evidence>